<keyword id="KW-0472">Membrane</keyword>
<keyword id="KW-0576">Peroxisome</keyword>
<keyword id="KW-0962">Peroxisome biogenesis</keyword>
<keyword id="KW-1185">Reference proteome</keyword>
<keyword id="KW-0812">Transmembrane</keyword>
<keyword id="KW-1133">Transmembrane helix</keyword>
<protein>
    <recommendedName>
        <fullName>Peroxisomal membrane protein 11A</fullName>
    </recommendedName>
    <alternativeName>
        <fullName>Peroxin-11A</fullName>
    </alternativeName>
    <alternativeName>
        <fullName>Peroxisomal biogenesis factor 11A</fullName>
    </alternativeName>
</protein>
<feature type="chain" id="PRO_0000330307" description="Peroxisomal membrane protein 11A">
    <location>
        <begin position="1"/>
        <end position="247"/>
    </location>
</feature>
<feature type="topological domain" description="Cytoplasmic" evidence="3">
    <location>
        <begin position="1"/>
        <end position="83"/>
    </location>
</feature>
<feature type="transmembrane region" description="Helical" evidence="3">
    <location>
        <begin position="84"/>
        <end position="105"/>
    </location>
</feature>
<feature type="topological domain" description="Lumenal" evidence="3">
    <location>
        <begin position="106"/>
        <end position="219"/>
    </location>
</feature>
<feature type="transmembrane region" description="Helical" evidence="3">
    <location>
        <begin position="220"/>
        <end position="239"/>
    </location>
</feature>
<feature type="topological domain" description="Cytoplasmic" evidence="3">
    <location>
        <begin position="240"/>
        <end position="247"/>
    </location>
</feature>
<feature type="region of interest" description="Required for homodimerization, interaction with PEX11G, and peroxisomal localization" evidence="2">
    <location>
        <begin position="220"/>
        <end position="239"/>
    </location>
</feature>
<gene>
    <name type="primary">PEX11A</name>
</gene>
<comment type="function">
    <text evidence="1 2">May be involved in peroxisomal proliferation and may regulate peroxisomes division. May mediate binding of coatomer proteins to the peroxisomal membrane. Promotes membrane protrusion and elongation on the peroxisomal surface.</text>
</comment>
<comment type="subunit">
    <text evidence="1 2">Homodimer. Heterodimer with PEX11G. Probably interacts with COPB2 and COPA. Interacts with PEX19. Interacts with FIS1.</text>
</comment>
<comment type="subcellular location">
    <subcellularLocation>
        <location evidence="2">Peroxisome membrane</location>
        <topology evidence="2">Multi-pass membrane protein</topology>
    </subcellularLocation>
</comment>
<comment type="similarity">
    <text evidence="4">Belongs to the peroxin-11 family.</text>
</comment>
<organism>
    <name type="scientific">Bos taurus</name>
    <name type="common">Bovine</name>
    <dbReference type="NCBI Taxonomy" id="9913"/>
    <lineage>
        <taxon>Eukaryota</taxon>
        <taxon>Metazoa</taxon>
        <taxon>Chordata</taxon>
        <taxon>Craniata</taxon>
        <taxon>Vertebrata</taxon>
        <taxon>Euteleostomi</taxon>
        <taxon>Mammalia</taxon>
        <taxon>Eutheria</taxon>
        <taxon>Laurasiatheria</taxon>
        <taxon>Artiodactyla</taxon>
        <taxon>Ruminantia</taxon>
        <taxon>Pecora</taxon>
        <taxon>Bovidae</taxon>
        <taxon>Bovinae</taxon>
        <taxon>Bos</taxon>
    </lineage>
</organism>
<proteinExistence type="evidence at transcript level"/>
<sequence>MDAFIRFTNQTQGRDRLFRATQYTCMLLRYLLEPKADNEKVVMKLKKLESSVSTGRKWFRLGNVVHALQATQQSVRATDLVPRICLTLASLNRVIYFICDTVLFVRSTGLASGVNKEKWRRWAARYYYYSLLLSLVRDLYEVSLQMKQVAHDRAKREKSPSQDTLGYSVADEETEWLQSLLLLLFHSLKRHPPLFLDTVKNFCDILNPLDQLGIYKSNPGIIGLGGLVSSVAGIITVAYPQMKLKTQ</sequence>
<accession>Q0VCP2</accession>
<evidence type="ECO:0000250" key="1">
    <source>
        <dbReference type="UniProtKB" id="O70597"/>
    </source>
</evidence>
<evidence type="ECO:0000250" key="2">
    <source>
        <dbReference type="UniProtKB" id="O75192"/>
    </source>
</evidence>
<evidence type="ECO:0000255" key="3"/>
<evidence type="ECO:0000305" key="4"/>
<dbReference type="EMBL" id="BC120076">
    <property type="protein sequence ID" value="AAI20077.1"/>
    <property type="molecule type" value="mRNA"/>
</dbReference>
<dbReference type="RefSeq" id="NP_001069189.1">
    <property type="nucleotide sequence ID" value="NM_001075721.1"/>
</dbReference>
<dbReference type="RefSeq" id="XP_010815258.1">
    <property type="nucleotide sequence ID" value="XM_010816956.4"/>
</dbReference>
<dbReference type="RefSeq" id="XP_015314667.1">
    <property type="nucleotide sequence ID" value="XM_015459181.3"/>
</dbReference>
<dbReference type="RefSeq" id="XP_024837531.1">
    <property type="nucleotide sequence ID" value="XM_024981763.2"/>
</dbReference>
<dbReference type="SMR" id="Q0VCP2"/>
<dbReference type="FunCoup" id="Q0VCP2">
    <property type="interactions" value="615"/>
</dbReference>
<dbReference type="STRING" id="9913.ENSBTAP00000008078"/>
<dbReference type="PaxDb" id="9913-ENSBTAP00000008078"/>
<dbReference type="Ensembl" id="ENSBTAT00000008078.4">
    <property type="protein sequence ID" value="ENSBTAP00000008078.3"/>
    <property type="gene ID" value="ENSBTAG00000006140.5"/>
</dbReference>
<dbReference type="GeneID" id="515608"/>
<dbReference type="KEGG" id="bta:515608"/>
<dbReference type="CTD" id="8800"/>
<dbReference type="VEuPathDB" id="HostDB:ENSBTAG00000006140"/>
<dbReference type="eggNOG" id="KOG4186">
    <property type="taxonomic scope" value="Eukaryota"/>
</dbReference>
<dbReference type="GeneTree" id="ENSGT00390000014273"/>
<dbReference type="HOGENOM" id="CLU_049216_2_0_1"/>
<dbReference type="InParanoid" id="Q0VCP2"/>
<dbReference type="OMA" id="AKRTMQL"/>
<dbReference type="OrthoDB" id="411017at2759"/>
<dbReference type="TreeFam" id="TF325704"/>
<dbReference type="Proteomes" id="UP000009136">
    <property type="component" value="Chromosome 21"/>
</dbReference>
<dbReference type="Bgee" id="ENSBTAG00000006140">
    <property type="expression patterns" value="Expressed in conceptus and 105 other cell types or tissues"/>
</dbReference>
<dbReference type="GO" id="GO:0005778">
    <property type="term" value="C:peroxisomal membrane"/>
    <property type="evidence" value="ECO:0000318"/>
    <property type="project" value="GO_Central"/>
</dbReference>
<dbReference type="GO" id="GO:0016559">
    <property type="term" value="P:peroxisome fission"/>
    <property type="evidence" value="ECO:0000318"/>
    <property type="project" value="GO_Central"/>
</dbReference>
<dbReference type="InterPro" id="IPR008733">
    <property type="entry name" value="PEX11"/>
</dbReference>
<dbReference type="PANTHER" id="PTHR12652">
    <property type="entry name" value="PEROXISOMAL BIOGENESIS FACTOR 11"/>
    <property type="match status" value="1"/>
</dbReference>
<dbReference type="PANTHER" id="PTHR12652:SF22">
    <property type="entry name" value="PEROXISOMAL MEMBRANE PROTEIN 11A"/>
    <property type="match status" value="1"/>
</dbReference>
<dbReference type="Pfam" id="PF05648">
    <property type="entry name" value="PEX11"/>
    <property type="match status" value="1"/>
</dbReference>
<reference key="1">
    <citation type="submission" date="2006-08" db="EMBL/GenBank/DDBJ databases">
        <authorList>
            <consortium name="NIH - Mammalian Gene Collection (MGC) project"/>
        </authorList>
    </citation>
    <scope>NUCLEOTIDE SEQUENCE [LARGE SCALE MRNA]</scope>
    <source>
        <strain>Hereford</strain>
        <tissue>Fetal pons</tissue>
    </source>
</reference>
<name>PX11A_BOVIN</name>